<organism>
    <name type="scientific">Drosophila grimshawi</name>
    <name type="common">Hawaiian fruit fly</name>
    <name type="synonym">Idiomyia grimshawi</name>
    <dbReference type="NCBI Taxonomy" id="7222"/>
    <lineage>
        <taxon>Eukaryota</taxon>
        <taxon>Metazoa</taxon>
        <taxon>Ecdysozoa</taxon>
        <taxon>Arthropoda</taxon>
        <taxon>Hexapoda</taxon>
        <taxon>Insecta</taxon>
        <taxon>Pterygota</taxon>
        <taxon>Neoptera</taxon>
        <taxon>Endopterygota</taxon>
        <taxon>Diptera</taxon>
        <taxon>Brachycera</taxon>
        <taxon>Muscomorpha</taxon>
        <taxon>Ephydroidea</taxon>
        <taxon>Drosophilidae</taxon>
        <taxon>Drosophila</taxon>
        <taxon>Hawaiian Drosophila</taxon>
    </lineage>
</organism>
<reference key="1">
    <citation type="journal article" date="2007" name="Nature">
        <title>Evolution of genes and genomes on the Drosophila phylogeny.</title>
        <authorList>
            <consortium name="Drosophila 12 genomes consortium"/>
        </authorList>
    </citation>
    <scope>NUCLEOTIDE SEQUENCE [LARGE SCALE GENOMIC DNA]</scope>
    <source>
        <strain>Tucson 15287-2541.00</strain>
    </source>
</reference>
<comment type="similarity">
    <text evidence="1">Belongs to the ubiquitin-conjugating enzyme family. FTS subfamily.</text>
</comment>
<comment type="caution">
    <text evidence="2">Lacks the conserved Cys residue necessary for ubiquitin-conjugating enzyme E2 activity.</text>
</comment>
<gene>
    <name type="primary">cbx</name>
    <name type="ORF">GH20212</name>
</gene>
<name>AKTP1_DROGR</name>
<protein>
    <recommendedName>
        <fullName>Protein crossbronx</fullName>
    </recommendedName>
</protein>
<keyword id="KW-1185">Reference proteome</keyword>
<proteinExistence type="inferred from homology"/>
<feature type="chain" id="PRO_0000379031" description="Protein crossbronx">
    <location>
        <begin position="1"/>
        <end position="246"/>
    </location>
</feature>
<feature type="domain" description="UBC core" evidence="1">
    <location>
        <begin position="20"/>
        <end position="177"/>
    </location>
</feature>
<dbReference type="EMBL" id="CH916367">
    <property type="protein sequence ID" value="EDW01871.1"/>
    <property type="molecule type" value="Genomic_DNA"/>
</dbReference>
<dbReference type="SMR" id="B4J613"/>
<dbReference type="FunCoup" id="B4J613">
    <property type="interactions" value="1017"/>
</dbReference>
<dbReference type="STRING" id="7222.B4J613"/>
<dbReference type="EnsemblMetazoa" id="FBtr0155626">
    <property type="protein sequence ID" value="FBpp0154118"/>
    <property type="gene ID" value="FBgn0127676"/>
</dbReference>
<dbReference type="EnsemblMetazoa" id="XM_001986968.2">
    <property type="protein sequence ID" value="XP_001987004.1"/>
    <property type="gene ID" value="LOC6560741"/>
</dbReference>
<dbReference type="GeneID" id="6560741"/>
<dbReference type="KEGG" id="dgr:6560741"/>
<dbReference type="CTD" id="47272"/>
<dbReference type="eggNOG" id="KOG0429">
    <property type="taxonomic scope" value="Eukaryota"/>
</dbReference>
<dbReference type="HOGENOM" id="CLU_083049_1_0_1"/>
<dbReference type="InParanoid" id="B4J613"/>
<dbReference type="OMA" id="WGFPEWR"/>
<dbReference type="OrthoDB" id="5596422at2759"/>
<dbReference type="PhylomeDB" id="B4J613"/>
<dbReference type="ChiTaRS" id="Ubx">
    <property type="organism name" value="fly"/>
</dbReference>
<dbReference type="Proteomes" id="UP000001070">
    <property type="component" value="Unassembled WGS sequence"/>
</dbReference>
<dbReference type="GO" id="GO:0042742">
    <property type="term" value="P:defense response to bacterium"/>
    <property type="evidence" value="ECO:0007669"/>
    <property type="project" value="EnsemblMetazoa"/>
</dbReference>
<dbReference type="GO" id="GO:0007291">
    <property type="term" value="P:sperm individualization"/>
    <property type="evidence" value="ECO:0007669"/>
    <property type="project" value="EnsemblMetazoa"/>
</dbReference>
<dbReference type="CDD" id="cd23814">
    <property type="entry name" value="UEV_AKTIP"/>
    <property type="match status" value="1"/>
</dbReference>
<dbReference type="FunFam" id="3.10.110.10:FF:000121">
    <property type="entry name" value="Protein crossbronx"/>
    <property type="match status" value="1"/>
</dbReference>
<dbReference type="Gene3D" id="3.10.110.10">
    <property type="entry name" value="Ubiquitin Conjugating Enzyme"/>
    <property type="match status" value="1"/>
</dbReference>
<dbReference type="InterPro" id="IPR000608">
    <property type="entry name" value="UBQ-conjugat_E2_core"/>
</dbReference>
<dbReference type="InterPro" id="IPR016135">
    <property type="entry name" value="UBQ-conjugating_enzyme/RWD"/>
</dbReference>
<dbReference type="Pfam" id="PF00179">
    <property type="entry name" value="UQ_con"/>
    <property type="match status" value="1"/>
</dbReference>
<dbReference type="SMART" id="SM00212">
    <property type="entry name" value="UBCc"/>
    <property type="match status" value="1"/>
</dbReference>
<dbReference type="SUPFAM" id="SSF54495">
    <property type="entry name" value="UBC-like"/>
    <property type="match status" value="1"/>
</dbReference>
<dbReference type="PROSITE" id="PS50127">
    <property type="entry name" value="UBC_2"/>
    <property type="match status" value="1"/>
</dbReference>
<accession>B4J613</accession>
<evidence type="ECO:0000255" key="1">
    <source>
        <dbReference type="PROSITE-ProRule" id="PRU00388"/>
    </source>
</evidence>
<evidence type="ECO:0000305" key="2"/>
<sequence>MTLDLDAQKKDEKLLLATIQQEYKILAEYKMIESEKLSGIYVIPSYANSLQWFGVFFGRHGFYEKSVFRFSILLSDGFPDDKSVPAIVFQHNVVHPLVCPYTYSLDLSHAFHEWRPAEDHLWQVLKYMQAIFADPLESIRNVSTVHERSNAEIIKLLNNNRDAYAALVQESILESKAHIYDNPHTEDPHYIIFEKFQDDIHGPVLEQIRQNRATVGSTESGGGGGAATGLSWVKFKEGEFKPLSIE</sequence>